<protein>
    <recommendedName>
        <fullName evidence="1">Ribosome maturation factor RimM</fullName>
    </recommendedName>
</protein>
<comment type="function">
    <text evidence="1">An accessory protein needed during the final step in the assembly of 30S ribosomal subunit, possibly for assembly of the head region. Essential for efficient processing of 16S rRNA. May be needed both before and after RbfA during the maturation of 16S rRNA. It has affinity for free ribosomal 30S subunits but not for 70S ribosomes.</text>
</comment>
<comment type="subunit">
    <text evidence="1">Binds ribosomal protein uS19.</text>
</comment>
<comment type="subcellular location">
    <subcellularLocation>
        <location evidence="1">Cytoplasm</location>
    </subcellularLocation>
</comment>
<comment type="domain">
    <text evidence="1">The PRC barrel domain binds ribosomal protein uS19.</text>
</comment>
<comment type="similarity">
    <text evidence="1">Belongs to the RimM family.</text>
</comment>
<accession>Q0BRH0</accession>
<gene>
    <name evidence="1" type="primary">rimM</name>
    <name type="ordered locus">GbCGDNIH1_1684</name>
</gene>
<evidence type="ECO:0000255" key="1">
    <source>
        <dbReference type="HAMAP-Rule" id="MF_00014"/>
    </source>
</evidence>
<evidence type="ECO:0000256" key="2">
    <source>
        <dbReference type="SAM" id="MobiDB-lite"/>
    </source>
</evidence>
<proteinExistence type="inferred from homology"/>
<organism>
    <name type="scientific">Granulibacter bethesdensis (strain ATCC BAA-1260 / CGDNIH1)</name>
    <dbReference type="NCBI Taxonomy" id="391165"/>
    <lineage>
        <taxon>Bacteria</taxon>
        <taxon>Pseudomonadati</taxon>
        <taxon>Pseudomonadota</taxon>
        <taxon>Alphaproteobacteria</taxon>
        <taxon>Acetobacterales</taxon>
        <taxon>Acetobacteraceae</taxon>
        <taxon>Granulibacter</taxon>
    </lineage>
</organism>
<keyword id="KW-0143">Chaperone</keyword>
<keyword id="KW-0963">Cytoplasm</keyword>
<keyword id="KW-1185">Reference proteome</keyword>
<keyword id="KW-0690">Ribosome biogenesis</keyword>
<keyword id="KW-0698">rRNA processing</keyword>
<name>RIMM_GRABC</name>
<feature type="chain" id="PRO_0000321731" description="Ribosome maturation factor RimM">
    <location>
        <begin position="1"/>
        <end position="186"/>
    </location>
</feature>
<feature type="domain" description="PRC barrel" evidence="1">
    <location>
        <begin position="93"/>
        <end position="168"/>
    </location>
</feature>
<feature type="region of interest" description="Disordered" evidence="2">
    <location>
        <begin position="163"/>
        <end position="186"/>
    </location>
</feature>
<feature type="compositionally biased region" description="Basic and acidic residues" evidence="2">
    <location>
        <begin position="173"/>
        <end position="186"/>
    </location>
</feature>
<sequence>MSRDLILLGVIGRPHGVRGLVHVVSYTADPDDLTAYGLLHDEAGRQIMLDWRADGLAGITIDGVPVQDRSAAERLTNTRLFINRDALPPVEDEDDFYLVDLIGLEARLVADETLLGQVAQVHDYGAGASLEITRSGGASLLVPFTRAAVPVVDIAAGRVLIDPPQEENAPEFGRNELGHDDGGEAA</sequence>
<dbReference type="EMBL" id="CP000394">
    <property type="protein sequence ID" value="ABI62582.1"/>
    <property type="molecule type" value="Genomic_DNA"/>
</dbReference>
<dbReference type="RefSeq" id="WP_011632386.1">
    <property type="nucleotide sequence ID" value="NC_008343.2"/>
</dbReference>
<dbReference type="SMR" id="Q0BRH0"/>
<dbReference type="STRING" id="391165.GbCGDNIH1_1684"/>
<dbReference type="GeneID" id="69745901"/>
<dbReference type="KEGG" id="gbe:GbCGDNIH1_1684"/>
<dbReference type="eggNOG" id="COG0806">
    <property type="taxonomic scope" value="Bacteria"/>
</dbReference>
<dbReference type="HOGENOM" id="CLU_077636_0_1_5"/>
<dbReference type="OrthoDB" id="9788191at2"/>
<dbReference type="Proteomes" id="UP000001963">
    <property type="component" value="Chromosome"/>
</dbReference>
<dbReference type="GO" id="GO:0005737">
    <property type="term" value="C:cytoplasm"/>
    <property type="evidence" value="ECO:0007669"/>
    <property type="project" value="UniProtKB-SubCell"/>
</dbReference>
<dbReference type="GO" id="GO:0005840">
    <property type="term" value="C:ribosome"/>
    <property type="evidence" value="ECO:0007669"/>
    <property type="project" value="InterPro"/>
</dbReference>
<dbReference type="GO" id="GO:0043022">
    <property type="term" value="F:ribosome binding"/>
    <property type="evidence" value="ECO:0007669"/>
    <property type="project" value="InterPro"/>
</dbReference>
<dbReference type="GO" id="GO:0042274">
    <property type="term" value="P:ribosomal small subunit biogenesis"/>
    <property type="evidence" value="ECO:0007669"/>
    <property type="project" value="UniProtKB-UniRule"/>
</dbReference>
<dbReference type="GO" id="GO:0006364">
    <property type="term" value="P:rRNA processing"/>
    <property type="evidence" value="ECO:0007669"/>
    <property type="project" value="UniProtKB-UniRule"/>
</dbReference>
<dbReference type="Gene3D" id="2.30.30.240">
    <property type="entry name" value="PRC-barrel domain"/>
    <property type="match status" value="1"/>
</dbReference>
<dbReference type="Gene3D" id="2.40.30.60">
    <property type="entry name" value="RimM"/>
    <property type="match status" value="1"/>
</dbReference>
<dbReference type="HAMAP" id="MF_00014">
    <property type="entry name" value="Ribosome_mat_RimM"/>
    <property type="match status" value="1"/>
</dbReference>
<dbReference type="InterPro" id="IPR011033">
    <property type="entry name" value="PRC_barrel-like_sf"/>
</dbReference>
<dbReference type="InterPro" id="IPR056792">
    <property type="entry name" value="PRC_RimM"/>
</dbReference>
<dbReference type="InterPro" id="IPR011961">
    <property type="entry name" value="RimM"/>
</dbReference>
<dbReference type="InterPro" id="IPR002676">
    <property type="entry name" value="RimM_N"/>
</dbReference>
<dbReference type="InterPro" id="IPR036976">
    <property type="entry name" value="RimM_N_sf"/>
</dbReference>
<dbReference type="InterPro" id="IPR009000">
    <property type="entry name" value="Transl_B-barrel_sf"/>
</dbReference>
<dbReference type="NCBIfam" id="TIGR02273">
    <property type="entry name" value="16S_RimM"/>
    <property type="match status" value="1"/>
</dbReference>
<dbReference type="PANTHER" id="PTHR33692">
    <property type="entry name" value="RIBOSOME MATURATION FACTOR RIMM"/>
    <property type="match status" value="1"/>
</dbReference>
<dbReference type="PANTHER" id="PTHR33692:SF1">
    <property type="entry name" value="RIBOSOME MATURATION FACTOR RIMM"/>
    <property type="match status" value="1"/>
</dbReference>
<dbReference type="Pfam" id="PF24986">
    <property type="entry name" value="PRC_RimM"/>
    <property type="match status" value="1"/>
</dbReference>
<dbReference type="Pfam" id="PF01782">
    <property type="entry name" value="RimM"/>
    <property type="match status" value="1"/>
</dbReference>
<dbReference type="SUPFAM" id="SSF50346">
    <property type="entry name" value="PRC-barrel domain"/>
    <property type="match status" value="1"/>
</dbReference>
<dbReference type="SUPFAM" id="SSF50447">
    <property type="entry name" value="Translation proteins"/>
    <property type="match status" value="1"/>
</dbReference>
<reference key="1">
    <citation type="journal article" date="2007" name="J. Bacteriol.">
        <title>Genome sequence analysis of the emerging human pathogenic acetic acid bacterium Granulibacter bethesdensis.</title>
        <authorList>
            <person name="Greenberg D.E."/>
            <person name="Porcella S.F."/>
            <person name="Zelazny A.M."/>
            <person name="Virtaneva K."/>
            <person name="Sturdevant D.E."/>
            <person name="Kupko J.J. III"/>
            <person name="Barbian K.D."/>
            <person name="Babar A."/>
            <person name="Dorward D.W."/>
            <person name="Holland S.M."/>
        </authorList>
    </citation>
    <scope>NUCLEOTIDE SEQUENCE [LARGE SCALE GENOMIC DNA]</scope>
    <source>
        <strain>ATCC BAA-1260 / CGDNIH1</strain>
    </source>
</reference>